<dbReference type="EC" id="2.3.1.40" evidence="1"/>
<dbReference type="EC" id="6.2.1.20" evidence="1"/>
<dbReference type="EMBL" id="FM200053">
    <property type="protein sequence ID" value="CAR60921.1"/>
    <property type="molecule type" value="Genomic_DNA"/>
</dbReference>
<dbReference type="RefSeq" id="WP_000896086.1">
    <property type="nucleotide sequence ID" value="NC_011147.1"/>
</dbReference>
<dbReference type="SMR" id="B5BFH6"/>
<dbReference type="KEGG" id="sek:SSPA2680"/>
<dbReference type="HOGENOM" id="CLU_000022_59_8_6"/>
<dbReference type="Proteomes" id="UP000001869">
    <property type="component" value="Chromosome"/>
</dbReference>
<dbReference type="GO" id="GO:0005886">
    <property type="term" value="C:plasma membrane"/>
    <property type="evidence" value="ECO:0007669"/>
    <property type="project" value="UniProtKB-SubCell"/>
</dbReference>
<dbReference type="GO" id="GO:0008779">
    <property type="term" value="F:acyl-[acyl-carrier-protein]-phospholipid O-acyltransferase activity"/>
    <property type="evidence" value="ECO:0007669"/>
    <property type="project" value="UniProtKB-UniRule"/>
</dbReference>
<dbReference type="GO" id="GO:0005524">
    <property type="term" value="F:ATP binding"/>
    <property type="evidence" value="ECO:0007669"/>
    <property type="project" value="UniProtKB-KW"/>
</dbReference>
<dbReference type="GO" id="GO:0008922">
    <property type="term" value="F:long-chain fatty acid [acyl-carrier-protein] ligase activity"/>
    <property type="evidence" value="ECO:0007669"/>
    <property type="project" value="UniProtKB-UniRule"/>
</dbReference>
<dbReference type="GO" id="GO:0031956">
    <property type="term" value="F:medium-chain fatty acid-CoA ligase activity"/>
    <property type="evidence" value="ECO:0007669"/>
    <property type="project" value="TreeGrafter"/>
</dbReference>
<dbReference type="GO" id="GO:0006631">
    <property type="term" value="P:fatty acid metabolic process"/>
    <property type="evidence" value="ECO:0007669"/>
    <property type="project" value="InterPro"/>
</dbReference>
<dbReference type="GO" id="GO:0008654">
    <property type="term" value="P:phospholipid biosynthetic process"/>
    <property type="evidence" value="ECO:0007669"/>
    <property type="project" value="InterPro"/>
</dbReference>
<dbReference type="CDD" id="cd05909">
    <property type="entry name" value="AAS_C"/>
    <property type="match status" value="1"/>
</dbReference>
<dbReference type="CDD" id="cd07989">
    <property type="entry name" value="LPLAT_AGPAT-like"/>
    <property type="match status" value="1"/>
</dbReference>
<dbReference type="FunFam" id="3.30.300.30:FF:000009">
    <property type="entry name" value="Bifunctional protein Aas"/>
    <property type="match status" value="1"/>
</dbReference>
<dbReference type="FunFam" id="3.40.50.12780:FF:000009">
    <property type="entry name" value="Bifunctional protein Aas"/>
    <property type="match status" value="1"/>
</dbReference>
<dbReference type="Gene3D" id="3.30.300.30">
    <property type="match status" value="1"/>
</dbReference>
<dbReference type="Gene3D" id="3.40.50.12780">
    <property type="entry name" value="N-terminal domain of ligase-like"/>
    <property type="match status" value="1"/>
</dbReference>
<dbReference type="HAMAP" id="MF_01162">
    <property type="entry name" value="Aas"/>
    <property type="match status" value="1"/>
</dbReference>
<dbReference type="InterPro" id="IPR023775">
    <property type="entry name" value="Aas"/>
</dbReference>
<dbReference type="InterPro" id="IPR045851">
    <property type="entry name" value="AMP-bd_C_sf"/>
</dbReference>
<dbReference type="InterPro" id="IPR020845">
    <property type="entry name" value="AMP-binding_CS"/>
</dbReference>
<dbReference type="InterPro" id="IPR000873">
    <property type="entry name" value="AMP-dep_synth/lig_dom"/>
</dbReference>
<dbReference type="InterPro" id="IPR042099">
    <property type="entry name" value="ANL_N_sf"/>
</dbReference>
<dbReference type="InterPro" id="IPR002123">
    <property type="entry name" value="Plipid/glycerol_acylTrfase"/>
</dbReference>
<dbReference type="NCBIfam" id="NF005959">
    <property type="entry name" value="PRK08043.1"/>
    <property type="match status" value="1"/>
</dbReference>
<dbReference type="PANTHER" id="PTHR43201">
    <property type="entry name" value="ACYL-COA SYNTHETASE"/>
    <property type="match status" value="1"/>
</dbReference>
<dbReference type="PANTHER" id="PTHR43201:SF8">
    <property type="entry name" value="ACYL-COA SYNTHETASE FAMILY MEMBER 3"/>
    <property type="match status" value="1"/>
</dbReference>
<dbReference type="Pfam" id="PF01553">
    <property type="entry name" value="Acyltransferase"/>
    <property type="match status" value="1"/>
</dbReference>
<dbReference type="Pfam" id="PF00501">
    <property type="entry name" value="AMP-binding"/>
    <property type="match status" value="1"/>
</dbReference>
<dbReference type="SMART" id="SM00563">
    <property type="entry name" value="PlsC"/>
    <property type="match status" value="1"/>
</dbReference>
<dbReference type="SUPFAM" id="SSF56801">
    <property type="entry name" value="Acetyl-CoA synthetase-like"/>
    <property type="match status" value="1"/>
</dbReference>
<dbReference type="SUPFAM" id="SSF69593">
    <property type="entry name" value="Glycerol-3-phosphate (1)-acyltransferase"/>
    <property type="match status" value="1"/>
</dbReference>
<dbReference type="PROSITE" id="PS00455">
    <property type="entry name" value="AMP_BINDING"/>
    <property type="match status" value="1"/>
</dbReference>
<organism>
    <name type="scientific">Salmonella paratyphi A (strain AKU_12601)</name>
    <dbReference type="NCBI Taxonomy" id="554290"/>
    <lineage>
        <taxon>Bacteria</taxon>
        <taxon>Pseudomonadati</taxon>
        <taxon>Pseudomonadota</taxon>
        <taxon>Gammaproteobacteria</taxon>
        <taxon>Enterobacterales</taxon>
        <taxon>Enterobacteriaceae</taxon>
        <taxon>Salmonella</taxon>
    </lineage>
</organism>
<comment type="function">
    <text evidence="1">Plays a role in lysophospholipid acylation. Transfers fatty acids to the 1-position via an enzyme-bound acyl-ACP intermediate in the presence of ATP and magnesium. Its physiological function is to regenerate phosphatidylethanolamine from 2-acyl-glycero-3-phosphoethanolamine (2-acyl-GPE) formed by transacylation reactions or degradation by phospholipase A1.</text>
</comment>
<comment type="catalytic activity">
    <reaction evidence="1">
        <text>a 2-acyl-sn-glycero-3-phosphoethanolamine + a fatty acyl-[ACP] = a 1,2-diacyl-sn-glycero-3-phosphoethanolamine + holo-[ACP]</text>
        <dbReference type="Rhea" id="RHEA:10304"/>
        <dbReference type="Rhea" id="RHEA-COMP:9685"/>
        <dbReference type="Rhea" id="RHEA-COMP:14125"/>
        <dbReference type="ChEBI" id="CHEBI:64479"/>
        <dbReference type="ChEBI" id="CHEBI:64612"/>
        <dbReference type="ChEBI" id="CHEBI:65213"/>
        <dbReference type="ChEBI" id="CHEBI:138651"/>
        <dbReference type="EC" id="2.3.1.40"/>
    </reaction>
</comment>
<comment type="catalytic activity">
    <reaction evidence="1">
        <text>a long-chain fatty acid + holo-[ACP] + ATP = a long-chain fatty acyl-[ACP] + AMP + diphosphate</text>
        <dbReference type="Rhea" id="RHEA:45588"/>
        <dbReference type="Rhea" id="RHEA-COMP:9685"/>
        <dbReference type="Rhea" id="RHEA-COMP:12682"/>
        <dbReference type="ChEBI" id="CHEBI:30616"/>
        <dbReference type="ChEBI" id="CHEBI:33019"/>
        <dbReference type="ChEBI" id="CHEBI:57560"/>
        <dbReference type="ChEBI" id="CHEBI:64479"/>
        <dbReference type="ChEBI" id="CHEBI:133243"/>
        <dbReference type="ChEBI" id="CHEBI:456215"/>
        <dbReference type="EC" id="6.2.1.20"/>
    </reaction>
</comment>
<comment type="subcellular location">
    <subcellularLocation>
        <location evidence="1">Cell inner membrane</location>
        <topology evidence="1">Multi-pass membrane protein</topology>
    </subcellularLocation>
</comment>
<comment type="similarity">
    <text evidence="1">In the N-terminal section; belongs to the 2-acyl-GPE acetyltransferase family.</text>
</comment>
<comment type="similarity">
    <text evidence="1">In the C-terminal section; belongs to the ATP-dependent AMP-binding enzyme family.</text>
</comment>
<name>AAS_SALPK</name>
<proteinExistence type="inferred from homology"/>
<sequence>MLFGFFRNLFRVLYRVRVTGDVRALQGNRVLITPNHVSFIDGMLLALFLPVRPVFAVYTSISQQWYMRWLTPLIDFVPLDPTKPMSIKHLMRLVEQGRPVVIFPEGRISVTGSLMKIYDGAGFVAAKSGATVIPLRIDGAELTPFSRLKGLVKRRLFPRIQLHILPPTQIPMPEAPRARDRRKIAGEMLHQIMMEARMAVRPRETLYESLLAAQYRYGAGKNCIEDINFTPDTYRKLLTKTLFVGRILEKYSVEGEKIGLMLPNAAISAAVIFGAVSRRRIPAMMNYTAGVKGLTSAIAAAEIKTIFTSRQFLDKGKLWHLPEQLTQVRWVYLEDLKADVTLADKLWIFAHLLAPRLAQVKQQPEDAAIILFTSGSEGHPKGVVHSHKSILANVEQIKTIADFTANDRFMSALPLFHSFGLTVGLFTPLLTGAEVFLYPSPLHYRIVPELVYDRNCTVLFGTSTFLGNYARFANPYDFYRLRYVVAGAEKLQESTKQLWQDKFGLRILEGYGVTECAPVVSINVPMAAKPGTVGRILPGMDARLLAVPGIENGGRLQLKGPNIMNGYLRVEKPGVLEVPSAENARGETERGWYDTGDIVRFDENGFVQIQGRAKRFAKIAGEMVSLEMVEQLALGVSADKMHATAIKSDASKGEALVLFTTDSELTREKLQHYAREHGIPELAVPRDIRYLKQLPLLGSGKPDFVTLKSWVDAPEQHHE</sequence>
<protein>
    <recommendedName>
        <fullName evidence="1">Bifunctional protein Aas</fullName>
    </recommendedName>
    <domain>
        <recommendedName>
            <fullName evidence="1">2-acylglycerophosphoethanolamine acyltransferase</fullName>
            <ecNumber evidence="1">2.3.1.40</ecNumber>
        </recommendedName>
        <alternativeName>
            <fullName evidence="1">2-acyl-GPE acyltransferase</fullName>
        </alternativeName>
        <alternativeName>
            <fullName evidence="1">Acyl-[acyl-carrier-protein]--phospholipid O-acyltransferase</fullName>
        </alternativeName>
    </domain>
    <domain>
        <recommendedName>
            <fullName evidence="1">Acyl-[acyl-carrier-protein] synthetase</fullName>
            <ecNumber evidence="1">6.2.1.20</ecNumber>
        </recommendedName>
        <alternativeName>
            <fullName evidence="1">Acyl-ACP synthetase</fullName>
        </alternativeName>
        <alternativeName>
            <fullName evidence="1">Long-chain-fatty-acid--[acyl-carrier-protein] ligase</fullName>
        </alternativeName>
    </domain>
</protein>
<keyword id="KW-0012">Acyltransferase</keyword>
<keyword id="KW-0067">ATP-binding</keyword>
<keyword id="KW-0997">Cell inner membrane</keyword>
<keyword id="KW-1003">Cell membrane</keyword>
<keyword id="KW-0436">Ligase</keyword>
<keyword id="KW-0472">Membrane</keyword>
<keyword id="KW-0511">Multifunctional enzyme</keyword>
<keyword id="KW-0547">Nucleotide-binding</keyword>
<keyword id="KW-0808">Transferase</keyword>
<keyword id="KW-0812">Transmembrane</keyword>
<keyword id="KW-1133">Transmembrane helix</keyword>
<reference key="1">
    <citation type="journal article" date="2009" name="BMC Genomics">
        <title>Pseudogene accumulation in the evolutionary histories of Salmonella enterica serovars Paratyphi A and Typhi.</title>
        <authorList>
            <person name="Holt K.E."/>
            <person name="Thomson N.R."/>
            <person name="Wain J."/>
            <person name="Langridge G.C."/>
            <person name="Hasan R."/>
            <person name="Bhutta Z.A."/>
            <person name="Quail M.A."/>
            <person name="Norbertczak H."/>
            <person name="Walker D."/>
            <person name="Simmonds M."/>
            <person name="White B."/>
            <person name="Bason N."/>
            <person name="Mungall K."/>
            <person name="Dougan G."/>
            <person name="Parkhill J."/>
        </authorList>
    </citation>
    <scope>NUCLEOTIDE SEQUENCE [LARGE SCALE GENOMIC DNA]</scope>
    <source>
        <strain>AKU_12601</strain>
    </source>
</reference>
<evidence type="ECO:0000255" key="1">
    <source>
        <dbReference type="HAMAP-Rule" id="MF_01162"/>
    </source>
</evidence>
<gene>
    <name evidence="1" type="primary">aas</name>
    <name type="ordered locus">SSPA2680</name>
</gene>
<feature type="chain" id="PRO_1000137901" description="Bifunctional protein Aas">
    <location>
        <begin position="1"/>
        <end position="719"/>
    </location>
</feature>
<feature type="transmembrane region" description="Helical" evidence="1">
    <location>
        <begin position="258"/>
        <end position="277"/>
    </location>
</feature>
<feature type="transmembrane region" description="Helical" evidence="1">
    <location>
        <begin position="409"/>
        <end position="433"/>
    </location>
</feature>
<feature type="region of interest" description="Acyltransferase">
    <location>
        <begin position="15"/>
        <end position="138"/>
    </location>
</feature>
<feature type="region of interest" description="AMP-binding">
    <location>
        <begin position="233"/>
        <end position="646"/>
    </location>
</feature>
<feature type="active site" evidence="1">
    <location>
        <position position="36"/>
    </location>
</feature>
<accession>B5BFH6</accession>